<proteinExistence type="evidence at protein level"/>
<feature type="chain" id="PRO_0000095557" description="Ferric uptake regulation protein">
    <location>
        <begin position="1"/>
        <end position="155"/>
    </location>
</feature>
<feature type="region of interest" description="DNA-binding" evidence="1">
    <location>
        <begin position="1"/>
        <end position="84"/>
    </location>
</feature>
<feature type="region of interest" description="Dimerization" evidence="1">
    <location>
        <begin position="85"/>
        <end position="155"/>
    </location>
</feature>
<feature type="binding site" evidence="1">
    <location>
        <position position="33"/>
    </location>
    <ligand>
        <name>Zn(2+)</name>
        <dbReference type="ChEBI" id="CHEBI:29105"/>
    </ligand>
</feature>
<feature type="binding site" evidence="1">
    <location>
        <position position="81"/>
    </location>
    <ligand>
        <name>Zn(2+)</name>
        <dbReference type="ChEBI" id="CHEBI:29105"/>
    </ligand>
</feature>
<feature type="binding site" evidence="1">
    <location>
        <position position="87"/>
    </location>
    <ligand>
        <name>Fe cation</name>
        <dbReference type="ChEBI" id="CHEBI:24875"/>
    </ligand>
</feature>
<feature type="binding site" evidence="1">
    <location>
        <position position="89"/>
    </location>
    <ligand>
        <name>Fe cation</name>
        <dbReference type="ChEBI" id="CHEBI:24875"/>
    </ligand>
</feature>
<feature type="binding site" evidence="1">
    <location>
        <position position="90"/>
    </location>
    <ligand>
        <name>Zn(2+)</name>
        <dbReference type="ChEBI" id="CHEBI:29105"/>
    </ligand>
</feature>
<feature type="binding site" evidence="1">
    <location>
        <position position="93"/>
    </location>
    <ligand>
        <name>Zn(2+)</name>
        <dbReference type="ChEBI" id="CHEBI:29105"/>
    </ligand>
</feature>
<feature type="binding site" evidence="1">
    <location>
        <position position="96"/>
    </location>
    <ligand>
        <name>Zn(2+)</name>
        <dbReference type="ChEBI" id="CHEBI:29105"/>
    </ligand>
</feature>
<feature type="binding site" evidence="1">
    <location>
        <position position="101"/>
    </location>
    <ligand>
        <name>Zn(2+)</name>
        <dbReference type="ChEBI" id="CHEBI:29105"/>
    </ligand>
</feature>
<feature type="binding site" evidence="1">
    <location>
        <position position="108"/>
    </location>
    <ligand>
        <name>Fe cation</name>
        <dbReference type="ChEBI" id="CHEBI:24875"/>
    </ligand>
</feature>
<feature type="binding site" evidence="1">
    <location>
        <position position="125"/>
    </location>
    <ligand>
        <name>Fe cation</name>
        <dbReference type="ChEBI" id="CHEBI:24875"/>
    </ligand>
</feature>
<feature type="helix" evidence="3">
    <location>
        <begin position="4"/>
        <end position="10"/>
    </location>
</feature>
<feature type="helix" evidence="3">
    <location>
        <begin position="17"/>
        <end position="26"/>
    </location>
</feature>
<feature type="strand" evidence="3">
    <location>
        <begin position="32"/>
        <end position="35"/>
    </location>
</feature>
<feature type="helix" evidence="3">
    <location>
        <begin position="36"/>
        <end position="45"/>
    </location>
</feature>
<feature type="helix" evidence="3">
    <location>
        <begin position="52"/>
        <end position="64"/>
    </location>
</feature>
<feature type="strand" evidence="3">
    <location>
        <begin position="67"/>
        <end position="71"/>
    </location>
</feature>
<feature type="turn" evidence="3">
    <location>
        <begin position="74"/>
        <end position="76"/>
    </location>
</feature>
<feature type="strand" evidence="3">
    <location>
        <begin position="79"/>
        <end position="82"/>
    </location>
</feature>
<gene>
    <name type="primary">fur</name>
</gene>
<sequence>MTDNNTALKKAGLKVTLPRLKILEVLQEPDNHHVSAEDLYKRLIDMGEEIGLATVYRVLNQFDDAGIVTRHNFEGGKSVFELTQQHHHDHLICLDCGKVIEFSDDSIELRQREIASRHGIRLTNHSLYLYGHCAEGDCRETNTPTTRWKNNSPFR</sequence>
<keyword id="KW-0002">3D-structure</keyword>
<keyword id="KW-0963">Cytoplasm</keyword>
<keyword id="KW-0238">DNA-binding</keyword>
<keyword id="KW-0408">Iron</keyword>
<keyword id="KW-0479">Metal-binding</keyword>
<keyword id="KW-0678">Repressor</keyword>
<keyword id="KW-0804">Transcription</keyword>
<keyword id="KW-0805">Transcription regulation</keyword>
<keyword id="KW-0862">Zinc</keyword>
<protein>
    <recommendedName>
        <fullName>Ferric uptake regulation protein</fullName>
        <shortName>Ferric uptake regulator</shortName>
    </recommendedName>
</protein>
<dbReference type="EMBL" id="L23871">
    <property type="protein sequence ID" value="AAB51077.1"/>
    <property type="molecule type" value="Genomic_DNA"/>
</dbReference>
<dbReference type="PDB" id="5L0P">
    <property type="method" value="X-ray"/>
    <property type="resolution" value="2.30 A"/>
    <property type="chains" value="A=3-83"/>
</dbReference>
<dbReference type="PDBsum" id="5L0P"/>
<dbReference type="BMRB" id="P45599"/>
<dbReference type="SMR" id="P45599"/>
<dbReference type="GO" id="GO:0005829">
    <property type="term" value="C:cytosol"/>
    <property type="evidence" value="ECO:0007669"/>
    <property type="project" value="TreeGrafter"/>
</dbReference>
<dbReference type="GO" id="GO:0003700">
    <property type="term" value="F:DNA-binding transcription factor activity"/>
    <property type="evidence" value="ECO:0007669"/>
    <property type="project" value="InterPro"/>
</dbReference>
<dbReference type="GO" id="GO:0000976">
    <property type="term" value="F:transcription cis-regulatory region binding"/>
    <property type="evidence" value="ECO:0007669"/>
    <property type="project" value="TreeGrafter"/>
</dbReference>
<dbReference type="GO" id="GO:0008270">
    <property type="term" value="F:zinc ion binding"/>
    <property type="evidence" value="ECO:0007669"/>
    <property type="project" value="TreeGrafter"/>
</dbReference>
<dbReference type="GO" id="GO:0045892">
    <property type="term" value="P:negative regulation of DNA-templated transcription"/>
    <property type="evidence" value="ECO:0007669"/>
    <property type="project" value="TreeGrafter"/>
</dbReference>
<dbReference type="GO" id="GO:1900705">
    <property type="term" value="P:negative regulation of siderophore biosynthetic process"/>
    <property type="evidence" value="ECO:0007669"/>
    <property type="project" value="TreeGrafter"/>
</dbReference>
<dbReference type="CDD" id="cd07153">
    <property type="entry name" value="Fur_like"/>
    <property type="match status" value="1"/>
</dbReference>
<dbReference type="FunFam" id="1.10.10.10:FF:000007">
    <property type="entry name" value="Ferric uptake regulation protein"/>
    <property type="match status" value="1"/>
</dbReference>
<dbReference type="FunFam" id="3.30.1490.190:FF:000001">
    <property type="entry name" value="Ferric uptake regulation protein"/>
    <property type="match status" value="1"/>
</dbReference>
<dbReference type="Gene3D" id="3.30.1490.190">
    <property type="match status" value="1"/>
</dbReference>
<dbReference type="Gene3D" id="1.10.10.10">
    <property type="entry name" value="Winged helix-like DNA-binding domain superfamily/Winged helix DNA-binding domain"/>
    <property type="match status" value="1"/>
</dbReference>
<dbReference type="InterPro" id="IPR002481">
    <property type="entry name" value="FUR"/>
</dbReference>
<dbReference type="InterPro" id="IPR043135">
    <property type="entry name" value="Fur_C"/>
</dbReference>
<dbReference type="InterPro" id="IPR036388">
    <property type="entry name" value="WH-like_DNA-bd_sf"/>
</dbReference>
<dbReference type="InterPro" id="IPR036390">
    <property type="entry name" value="WH_DNA-bd_sf"/>
</dbReference>
<dbReference type="NCBIfam" id="NF006999">
    <property type="entry name" value="PRK09462.1"/>
    <property type="match status" value="1"/>
</dbReference>
<dbReference type="PANTHER" id="PTHR33202:SF2">
    <property type="entry name" value="FERRIC UPTAKE REGULATION PROTEIN"/>
    <property type="match status" value="1"/>
</dbReference>
<dbReference type="PANTHER" id="PTHR33202">
    <property type="entry name" value="ZINC UPTAKE REGULATION PROTEIN"/>
    <property type="match status" value="1"/>
</dbReference>
<dbReference type="Pfam" id="PF01475">
    <property type="entry name" value="FUR"/>
    <property type="match status" value="1"/>
</dbReference>
<dbReference type="SUPFAM" id="SSF46785">
    <property type="entry name" value="Winged helix' DNA-binding domain"/>
    <property type="match status" value="1"/>
</dbReference>
<organism>
    <name type="scientific">Klebsiella pneumoniae</name>
    <dbReference type="NCBI Taxonomy" id="573"/>
    <lineage>
        <taxon>Bacteria</taxon>
        <taxon>Pseudomonadati</taxon>
        <taxon>Pseudomonadota</taxon>
        <taxon>Gammaproteobacteria</taxon>
        <taxon>Enterobacterales</taxon>
        <taxon>Enterobacteriaceae</taxon>
        <taxon>Klebsiella/Raoultella group</taxon>
        <taxon>Klebsiella</taxon>
        <taxon>Klebsiella pneumoniae complex</taxon>
    </lineage>
</organism>
<reference key="1">
    <citation type="journal article" date="1997" name="Gene">
        <title>The fur gene from Klebsiella pneumoniae: characterization, genomic organization and phylogenetic analysis.</title>
        <authorList>
            <person name="Achenbach L.A."/>
            <person name="Yang W."/>
        </authorList>
    </citation>
    <scope>NUCLEOTIDE SEQUENCE [GENOMIC DNA]</scope>
    <source>
        <strain>ATCC 13883 / DSM 30104 / JCM 1662 / NBRC 14940 / NCIMB 13281 / NCTC 9633</strain>
    </source>
</reference>
<comment type="function">
    <text evidence="1">Acts as a global negative controlling element, employing Fe(2+) as a cofactor to bind the operator of the repressed genes. Regulates the expression of several outer-membrane proteins including the iron transport operon (By similarity).</text>
</comment>
<comment type="subunit">
    <text evidence="1">Homodimer.</text>
</comment>
<comment type="subcellular location">
    <subcellularLocation>
        <location evidence="1">Cytoplasm</location>
    </subcellularLocation>
</comment>
<comment type="similarity">
    <text evidence="2">Belongs to the Fur family.</text>
</comment>
<name>FUR_KLEPN</name>
<evidence type="ECO:0000250" key="1"/>
<evidence type="ECO:0000305" key="2"/>
<evidence type="ECO:0007829" key="3">
    <source>
        <dbReference type="PDB" id="5L0P"/>
    </source>
</evidence>
<accession>P45599</accession>
<accession>O07027</accession>